<evidence type="ECO:0000250" key="1"/>
<evidence type="ECO:0000255" key="2"/>
<evidence type="ECO:0000255" key="3">
    <source>
        <dbReference type="PROSITE-ProRule" id="PRU00433"/>
    </source>
</evidence>
<evidence type="ECO:0000256" key="4">
    <source>
        <dbReference type="SAM" id="MobiDB-lite"/>
    </source>
</evidence>
<evidence type="ECO:0000269" key="5">
    <source>
    </source>
</evidence>
<gene>
    <name type="primary">tsdA</name>
    <name type="ordered locus">Psyc_1943</name>
</gene>
<keyword id="KW-0349">Heme</keyword>
<keyword id="KW-0408">Iron</keyword>
<keyword id="KW-0479">Metal-binding</keyword>
<keyword id="KW-0560">Oxidoreductase</keyword>
<keyword id="KW-0574">Periplasm</keyword>
<keyword id="KW-1185">Reference proteome</keyword>
<keyword id="KW-0677">Repeat</keyword>
<keyword id="KW-0732">Signal</keyword>
<reference key="1">
    <citation type="journal article" date="2010" name="Appl. Environ. Microbiol.">
        <title>The genome sequence of Psychrobacter arcticus 273-4, a psychroactive Siberian permafrost bacterium, reveals mechanisms for adaptation to low-temperature growth.</title>
        <authorList>
            <person name="Ayala-del-Rio H.L."/>
            <person name="Chain P.S."/>
            <person name="Grzymski J.J."/>
            <person name="Ponder M.A."/>
            <person name="Ivanova N."/>
            <person name="Bergholz P.W."/>
            <person name="Di Bartolo G."/>
            <person name="Hauser L."/>
            <person name="Land M."/>
            <person name="Bakermans C."/>
            <person name="Rodrigues D."/>
            <person name="Klappenbach J."/>
            <person name="Zarka D."/>
            <person name="Larimer F."/>
            <person name="Richardson P."/>
            <person name="Murray A."/>
            <person name="Thomashow M."/>
            <person name="Tiedje J.M."/>
        </authorList>
    </citation>
    <scope>NUCLEOTIDE SEQUENCE [LARGE SCALE GENOMIC DNA]</scope>
    <source>
        <strain>DSM 17307 / VKM B-2377 / 273-4</strain>
    </source>
</reference>
<reference key="2">
    <citation type="journal article" date="2012" name="Environ. Microbiol.">
        <title>Thiosulfate dehydrogenase: a widespread unusual acidophilic c-type cytochrome.</title>
        <authorList>
            <person name="Denkmann K."/>
            <person name="Grein F."/>
            <person name="Zigann R."/>
            <person name="Siemen A."/>
            <person name="Bergmann J."/>
            <person name="van Helmont S."/>
            <person name="Nicolai A."/>
            <person name="Pereira I.A."/>
            <person name="Dahl C."/>
        </authorList>
    </citation>
    <scope>FUNCTION</scope>
    <scope>CATALYTIC ACTIVITY</scope>
    <scope>BIOPHYSICOCHEMICAL PROPERTIES</scope>
    <scope>DISRUPTION PHENOTYPE</scope>
</reference>
<sequence>MKIIPYRKRSVLIATIFAISAVGITGCSDNTETKAVERVEEAAALARVKDLEARAEALKSNMPAANDMTATAGGTDTASGKPTIKMPDESTIPDDEFGAAVRRGLQISNHTYKELPNNVGNQLNCTSCHLGNGSEAYAAPWNNTPSVYPNYSKRTGRINTIQERINGCFERSLNGKALDLNSDDMNAMVSYMSWLSQDMPFGVSPEGSGFVKVDKTLEPNTDNGKKLFAEKCSVCHGATGEGQYNDDGTYVYPAIAGDKSFNDGAGMARTYTAASFIKGKMPFGQGGSLSDQEAVDIASYFTHLPRPIKANKDKDWPNGDAPKDVRR</sequence>
<feature type="signal peptide" evidence="2">
    <location>
        <begin position="1"/>
        <end position="26"/>
    </location>
</feature>
<feature type="chain" id="PRO_0000430264" description="Thiosulfate dehydrogenase">
    <location>
        <begin position="27"/>
        <end position="327"/>
    </location>
</feature>
<feature type="domain" description="Cytochrome c 1" evidence="3">
    <location>
        <begin position="99"/>
        <end position="196"/>
    </location>
</feature>
<feature type="domain" description="Cytochrome c 2" evidence="3">
    <location>
        <begin position="219"/>
        <end position="305"/>
    </location>
</feature>
<feature type="region of interest" description="Disordered" evidence="4">
    <location>
        <begin position="66"/>
        <end position="93"/>
    </location>
</feature>
<feature type="compositionally biased region" description="Low complexity" evidence="4">
    <location>
        <begin position="66"/>
        <end position="78"/>
    </location>
</feature>
<feature type="binding site" description="covalent" evidence="3">
    <location>
        <position position="125"/>
    </location>
    <ligand>
        <name>heme c</name>
        <dbReference type="ChEBI" id="CHEBI:61717"/>
        <label>1</label>
    </ligand>
</feature>
<feature type="binding site" description="covalent" evidence="3">
    <location>
        <position position="128"/>
    </location>
    <ligand>
        <name>heme c</name>
        <dbReference type="ChEBI" id="CHEBI:61717"/>
        <label>1</label>
    </ligand>
</feature>
<feature type="binding site" description="axial binding residue" evidence="3">
    <location>
        <position position="129"/>
    </location>
    <ligand>
        <name>heme c</name>
        <dbReference type="ChEBI" id="CHEBI:61717"/>
        <label>1</label>
    </ligand>
    <ligandPart>
        <name>Fe</name>
        <dbReference type="ChEBI" id="CHEBI:18248"/>
    </ligandPart>
</feature>
<feature type="binding site" description="covalent" evidence="3">
    <location>
        <position position="232"/>
    </location>
    <ligand>
        <name>heme c</name>
        <dbReference type="ChEBI" id="CHEBI:61717"/>
        <label>2</label>
    </ligand>
</feature>
<feature type="binding site" description="covalent" evidence="3">
    <location>
        <position position="235"/>
    </location>
    <ligand>
        <name>heme c</name>
        <dbReference type="ChEBI" id="CHEBI:61717"/>
        <label>2</label>
    </ligand>
</feature>
<feature type="binding site" description="axial binding residue" evidence="3">
    <location>
        <position position="236"/>
    </location>
    <ligand>
        <name>heme c</name>
        <dbReference type="ChEBI" id="CHEBI:61717"/>
        <label>2</label>
    </ligand>
    <ligandPart>
        <name>Fe</name>
        <dbReference type="ChEBI" id="CHEBI:18248"/>
    </ligandPart>
</feature>
<organism>
    <name type="scientific">Psychrobacter arcticus (strain DSM 17307 / VKM B-2377 / 273-4)</name>
    <dbReference type="NCBI Taxonomy" id="259536"/>
    <lineage>
        <taxon>Bacteria</taxon>
        <taxon>Pseudomonadati</taxon>
        <taxon>Pseudomonadota</taxon>
        <taxon>Gammaproteobacteria</taxon>
        <taxon>Moraxellales</taxon>
        <taxon>Moraxellaceae</taxon>
        <taxon>Psychrobacter</taxon>
    </lineage>
</organism>
<accession>Q4FQB7</accession>
<dbReference type="EC" id="1.8.2.2"/>
<dbReference type="EMBL" id="CP000082">
    <property type="protein sequence ID" value="AAZ19791.1"/>
    <property type="molecule type" value="Genomic_DNA"/>
</dbReference>
<dbReference type="RefSeq" id="WP_011281200.1">
    <property type="nucleotide sequence ID" value="NC_007204.1"/>
</dbReference>
<dbReference type="SMR" id="Q4FQB7"/>
<dbReference type="STRING" id="259536.Psyc_1943"/>
<dbReference type="KEGG" id="par:Psyc_1943"/>
<dbReference type="eggNOG" id="COG3258">
    <property type="taxonomic scope" value="Bacteria"/>
</dbReference>
<dbReference type="HOGENOM" id="CLU_058582_2_0_6"/>
<dbReference type="OrthoDB" id="9811281at2"/>
<dbReference type="Proteomes" id="UP000000546">
    <property type="component" value="Chromosome"/>
</dbReference>
<dbReference type="GO" id="GO:0042597">
    <property type="term" value="C:periplasmic space"/>
    <property type="evidence" value="ECO:0007669"/>
    <property type="project" value="UniProtKB-SubCell"/>
</dbReference>
<dbReference type="GO" id="GO:0009055">
    <property type="term" value="F:electron transfer activity"/>
    <property type="evidence" value="ECO:0007669"/>
    <property type="project" value="InterPro"/>
</dbReference>
<dbReference type="GO" id="GO:0020037">
    <property type="term" value="F:heme binding"/>
    <property type="evidence" value="ECO:0007669"/>
    <property type="project" value="InterPro"/>
</dbReference>
<dbReference type="GO" id="GO:0046872">
    <property type="term" value="F:metal ion binding"/>
    <property type="evidence" value="ECO:0007669"/>
    <property type="project" value="UniProtKB-KW"/>
</dbReference>
<dbReference type="GO" id="GO:0050338">
    <property type="term" value="F:thiosulfate dehydrogenase activity"/>
    <property type="evidence" value="ECO:0000314"/>
    <property type="project" value="UniProtKB"/>
</dbReference>
<dbReference type="FunFam" id="1.10.760.10:FF:000036">
    <property type="entry name" value="Thiosulfate dehydrogenase"/>
    <property type="match status" value="1"/>
</dbReference>
<dbReference type="FunFam" id="1.10.760.10:FF:000039">
    <property type="entry name" value="Thiosulfate dehydrogenase"/>
    <property type="match status" value="1"/>
</dbReference>
<dbReference type="Gene3D" id="1.10.760.10">
    <property type="entry name" value="Cytochrome c-like domain"/>
    <property type="match status" value="2"/>
</dbReference>
<dbReference type="InterPro" id="IPR009056">
    <property type="entry name" value="Cyt_c-like_dom"/>
</dbReference>
<dbReference type="InterPro" id="IPR036909">
    <property type="entry name" value="Cyt_c-like_dom_sf"/>
</dbReference>
<dbReference type="InterPro" id="IPR051459">
    <property type="entry name" value="Cytochrome_c-type_DH"/>
</dbReference>
<dbReference type="PANTHER" id="PTHR35008:SF4">
    <property type="entry name" value="BLL4482 PROTEIN"/>
    <property type="match status" value="1"/>
</dbReference>
<dbReference type="PANTHER" id="PTHR35008">
    <property type="entry name" value="BLL4482 PROTEIN-RELATED"/>
    <property type="match status" value="1"/>
</dbReference>
<dbReference type="Pfam" id="PF13442">
    <property type="entry name" value="Cytochrome_CBB3"/>
    <property type="match status" value="1"/>
</dbReference>
<dbReference type="Pfam" id="PF21342">
    <property type="entry name" value="SoxA-TsdA_cyt-c"/>
    <property type="match status" value="1"/>
</dbReference>
<dbReference type="SUPFAM" id="SSF46626">
    <property type="entry name" value="Cytochrome c"/>
    <property type="match status" value="2"/>
</dbReference>
<dbReference type="PROSITE" id="PS51007">
    <property type="entry name" value="CYTC"/>
    <property type="match status" value="2"/>
</dbReference>
<dbReference type="PROSITE" id="PS51257">
    <property type="entry name" value="PROKAR_LIPOPROTEIN"/>
    <property type="match status" value="1"/>
</dbReference>
<name>TSDA_PSYA2</name>
<comment type="function">
    <text evidence="5">Catalyzes the oxidation of 2 molecules of thiosulfate to tetrathionate.</text>
</comment>
<comment type="catalytic activity">
    <reaction evidence="5">
        <text>2 thiosulfate + 2 Fe(III)-[cytochrome c] = tetrathionate + 2 Fe(II)-[cytochrome c] + 2 H(+)</text>
        <dbReference type="Rhea" id="RHEA:20549"/>
        <dbReference type="Rhea" id="RHEA-COMP:10350"/>
        <dbReference type="Rhea" id="RHEA-COMP:14399"/>
        <dbReference type="ChEBI" id="CHEBI:15226"/>
        <dbReference type="ChEBI" id="CHEBI:15378"/>
        <dbReference type="ChEBI" id="CHEBI:29033"/>
        <dbReference type="ChEBI" id="CHEBI:29034"/>
        <dbReference type="ChEBI" id="CHEBI:33542"/>
        <dbReference type="EC" id="1.8.2.2"/>
    </reaction>
</comment>
<comment type="biophysicochemical properties">
    <kinetics>
        <Vmax evidence="5">33.4 umol/min/mg enzyme (at pH 4.2)</Vmax>
    </kinetics>
    <temperatureDependence>
        <text evidence="5">Optimum temperature is 20 degrees Celsius.</text>
    </temperatureDependence>
</comment>
<comment type="subunit">
    <text evidence="1">Monomer.</text>
</comment>
<comment type="subcellular location">
    <subcellularLocation>
        <location evidence="1">Periplasm</location>
    </subcellularLocation>
</comment>
<comment type="PTM">
    <text evidence="1">Binds 2 heme c groups covalently per subunit.</text>
</comment>
<comment type="disruption phenotype">
    <text evidence="5">Cells are unable to produce tetrathionate from thiosulfate.</text>
</comment>
<proteinExistence type="evidence at protein level"/>
<protein>
    <recommendedName>
        <fullName>Thiosulfate dehydrogenase</fullName>
        <ecNumber>1.8.2.2</ecNumber>
    </recommendedName>
    <alternativeName>
        <fullName>Tetrathionate synthase</fullName>
    </alternativeName>
</protein>